<organism>
    <name type="scientific">Pelargonium hortorum</name>
    <name type="common">Common geranium</name>
    <name type="synonym">Pelargonium inquinans x Pelargonium zonale</name>
    <dbReference type="NCBI Taxonomy" id="4031"/>
    <lineage>
        <taxon>Eukaryota</taxon>
        <taxon>Viridiplantae</taxon>
        <taxon>Streptophyta</taxon>
        <taxon>Embryophyta</taxon>
        <taxon>Tracheophyta</taxon>
        <taxon>Spermatophyta</taxon>
        <taxon>Magnoliopsida</taxon>
        <taxon>eudicotyledons</taxon>
        <taxon>Gunneridae</taxon>
        <taxon>Pentapetalae</taxon>
        <taxon>rosids</taxon>
        <taxon>malvids</taxon>
        <taxon>Geraniales</taxon>
        <taxon>Geraniaceae</taxon>
        <taxon>Pelargonium</taxon>
    </lineage>
</organism>
<protein>
    <recommendedName>
        <fullName evidence="2">Large ribosomal subunit protein uL23cz/uL23cy</fullName>
    </recommendedName>
    <alternativeName>
        <fullName>50S ribosomal protein L23, chloroplastic</fullName>
    </alternativeName>
</protein>
<reference key="1">
    <citation type="journal article" date="2006" name="Mol. Biol. Evol.">
        <title>The complete chloroplast genome sequence of Pelargonium x hortorum: organization and evolution of the largest and most highly rearranged chloroplast genome of land plants.</title>
        <authorList>
            <person name="Chumley T.W."/>
            <person name="Palmer J.D."/>
            <person name="Mower J.P."/>
            <person name="Fourcade H.M."/>
            <person name="Calie P.J."/>
            <person name="Boore J.L."/>
            <person name="Jansen R.K."/>
        </authorList>
    </citation>
    <scope>NUCLEOTIDE SEQUENCE [LARGE SCALE GENOMIC DNA]</scope>
    <source>
        <strain>cv. Ringo White</strain>
    </source>
</reference>
<geneLocation type="chloroplast"/>
<sequence>MDGIKYAVVTDKSLRLVSKNQYTFNVESGSTRTEIKSWVELFFGVKVIAMNSHRLPGKRRRMGHTMHYRRMIITLQPGYSIPSLINLII</sequence>
<feature type="chain" id="PRO_0000272917" description="Large ribosomal subunit protein uL23cz/uL23cy">
    <location>
        <begin position="1"/>
        <end position="89"/>
    </location>
</feature>
<gene>
    <name type="primary">rpl23-A</name>
</gene>
<gene>
    <name type="primary">rpl23-B</name>
</gene>
<proteinExistence type="inferred from homology"/>
<comment type="function">
    <text evidence="1">Binds to 23S rRNA.</text>
</comment>
<comment type="subunit">
    <text evidence="1">Part of the 50S ribosomal subunit.</text>
</comment>
<comment type="subcellular location">
    <subcellularLocation>
        <location>Plastid</location>
        <location>Chloroplast</location>
    </subcellularLocation>
</comment>
<comment type="similarity">
    <text evidence="2">Belongs to the universal ribosomal protein uL23 family.</text>
</comment>
<keyword id="KW-0150">Chloroplast</keyword>
<keyword id="KW-0934">Plastid</keyword>
<keyword id="KW-0687">Ribonucleoprotein</keyword>
<keyword id="KW-0689">Ribosomal protein</keyword>
<keyword id="KW-0694">RNA-binding</keyword>
<keyword id="KW-0699">rRNA-binding</keyword>
<name>RK23_PELHO</name>
<dbReference type="EMBL" id="DQ897681">
    <property type="protein sequence ID" value="ABI17289.1"/>
    <property type="molecule type" value="Genomic_DNA"/>
</dbReference>
<dbReference type="EMBL" id="DQ897681">
    <property type="protein sequence ID" value="ABI17350.1"/>
    <property type="molecule type" value="Genomic_DNA"/>
</dbReference>
<dbReference type="SMR" id="Q06FM2"/>
<dbReference type="GO" id="GO:0009507">
    <property type="term" value="C:chloroplast"/>
    <property type="evidence" value="ECO:0007669"/>
    <property type="project" value="UniProtKB-SubCell"/>
</dbReference>
<dbReference type="GO" id="GO:1990904">
    <property type="term" value="C:ribonucleoprotein complex"/>
    <property type="evidence" value="ECO:0007669"/>
    <property type="project" value="UniProtKB-KW"/>
</dbReference>
<dbReference type="GO" id="GO:0005840">
    <property type="term" value="C:ribosome"/>
    <property type="evidence" value="ECO:0007669"/>
    <property type="project" value="UniProtKB-KW"/>
</dbReference>
<dbReference type="GO" id="GO:0003729">
    <property type="term" value="F:mRNA binding"/>
    <property type="evidence" value="ECO:0007669"/>
    <property type="project" value="UniProtKB-ARBA"/>
</dbReference>
<dbReference type="GO" id="GO:0019843">
    <property type="term" value="F:rRNA binding"/>
    <property type="evidence" value="ECO:0007669"/>
    <property type="project" value="UniProtKB-UniRule"/>
</dbReference>
<dbReference type="GO" id="GO:0003735">
    <property type="term" value="F:structural constituent of ribosome"/>
    <property type="evidence" value="ECO:0007669"/>
    <property type="project" value="InterPro"/>
</dbReference>
<dbReference type="GO" id="GO:0006412">
    <property type="term" value="P:translation"/>
    <property type="evidence" value="ECO:0007669"/>
    <property type="project" value="UniProtKB-UniRule"/>
</dbReference>
<dbReference type="FunFam" id="3.30.70.330:FF:000002">
    <property type="entry name" value="50S ribosomal protein L23, chloroplastic"/>
    <property type="match status" value="1"/>
</dbReference>
<dbReference type="Gene3D" id="3.30.70.330">
    <property type="match status" value="1"/>
</dbReference>
<dbReference type="HAMAP" id="MF_01369_B">
    <property type="entry name" value="Ribosomal_uL23_B"/>
    <property type="match status" value="1"/>
</dbReference>
<dbReference type="InterPro" id="IPR012677">
    <property type="entry name" value="Nucleotide-bd_a/b_plait_sf"/>
</dbReference>
<dbReference type="InterPro" id="IPR013025">
    <property type="entry name" value="Ribosomal_uL23-like"/>
</dbReference>
<dbReference type="InterPro" id="IPR012678">
    <property type="entry name" value="Ribosomal_uL23/eL15/eS24_sf"/>
</dbReference>
<dbReference type="InterPro" id="IPR001014">
    <property type="entry name" value="Ribosomal_uL23_CS"/>
</dbReference>
<dbReference type="PANTHER" id="PTHR11620">
    <property type="entry name" value="60S RIBOSOMAL PROTEIN L23A"/>
    <property type="match status" value="1"/>
</dbReference>
<dbReference type="Pfam" id="PF00276">
    <property type="entry name" value="Ribosomal_L23"/>
    <property type="match status" value="1"/>
</dbReference>
<dbReference type="SUPFAM" id="SSF54189">
    <property type="entry name" value="Ribosomal proteins S24e, L23 and L15e"/>
    <property type="match status" value="1"/>
</dbReference>
<dbReference type="PROSITE" id="PS00050">
    <property type="entry name" value="RIBOSOMAL_L23"/>
    <property type="match status" value="1"/>
</dbReference>
<evidence type="ECO:0000250" key="1"/>
<evidence type="ECO:0000305" key="2"/>
<accession>Q06FM2</accession>